<organism>
    <name type="scientific">Escherichia coli (strain SE11)</name>
    <dbReference type="NCBI Taxonomy" id="409438"/>
    <lineage>
        <taxon>Bacteria</taxon>
        <taxon>Pseudomonadati</taxon>
        <taxon>Pseudomonadota</taxon>
        <taxon>Gammaproteobacteria</taxon>
        <taxon>Enterobacterales</taxon>
        <taxon>Enterobacteriaceae</taxon>
        <taxon>Escherichia</taxon>
    </lineage>
</organism>
<protein>
    <recommendedName>
        <fullName>Probable fimbrial chaperone EcpB</fullName>
    </recommendedName>
</protein>
<proteinExistence type="inferred from homology"/>
<comment type="function">
    <text evidence="1">Part of the ecpRABCDE operon, which encodes the E.coli common pilus (ECP). ECP is found in both commensal and pathogenic strains and plays a dual role in early-stage biofilm development and host cell recognition (By similarity).</text>
</comment>
<comment type="induction">
    <text evidence="1">Negatively regulated by H-NS. Positively regulated by IHF and EcpR (By similarity).</text>
</comment>
<comment type="similarity">
    <text evidence="3">Belongs to the EcpB/EcpE family.</text>
</comment>
<feature type="signal peptide" evidence="2">
    <location>
        <begin position="1"/>
        <end position="20"/>
    </location>
</feature>
<feature type="chain" id="PRO_0000369157" description="Probable fimbrial chaperone EcpB">
    <location>
        <begin position="21"/>
        <end position="222"/>
    </location>
</feature>
<gene>
    <name type="primary">ecpB</name>
    <name type="synonym">matC</name>
    <name type="ordered locus">ECSE_0310</name>
</gene>
<name>ECPB_ECOSE</name>
<sequence length="222" mass="24517">MKKHLLPLALLFSGISPAQALDVGDISSFMNSDSSTLSKTIKNSTDSGRLINIRLERLSSPLDDGQVISMDKPDELLLTPASLLLPAQASEVIRFFYKGPADEKERYYRIVWFDQALSDAQRDNANRSAVATASARIGTILVVAPRQANYHFQYANGSLTNTGNATLRILAYGPCLKAANGKECKENYYLMPGKSRRFTRVDTADNKGRVALWQGDKFIPVK</sequence>
<reference key="1">
    <citation type="journal article" date="2008" name="DNA Res.">
        <title>Complete genome sequence and comparative analysis of the wild-type commensal Escherichia coli strain SE11 isolated from a healthy adult.</title>
        <authorList>
            <person name="Oshima K."/>
            <person name="Toh H."/>
            <person name="Ogura Y."/>
            <person name="Sasamoto H."/>
            <person name="Morita H."/>
            <person name="Park S.-H."/>
            <person name="Ooka T."/>
            <person name="Iyoda S."/>
            <person name="Taylor T.D."/>
            <person name="Hayashi T."/>
            <person name="Itoh K."/>
            <person name="Hattori M."/>
        </authorList>
    </citation>
    <scope>NUCLEOTIDE SEQUENCE [LARGE SCALE GENOMIC DNA]</scope>
    <source>
        <strain>SE11</strain>
    </source>
</reference>
<keyword id="KW-0143">Chaperone</keyword>
<keyword id="KW-1029">Fimbrium biogenesis</keyword>
<keyword id="KW-0732">Signal</keyword>
<accession>B6I080</accession>
<evidence type="ECO:0000250" key="1"/>
<evidence type="ECO:0000255" key="2"/>
<evidence type="ECO:0000305" key="3"/>
<dbReference type="EMBL" id="AP009240">
    <property type="protein sequence ID" value="BAG75834.1"/>
    <property type="molecule type" value="Genomic_DNA"/>
</dbReference>
<dbReference type="RefSeq" id="WP_000716398.1">
    <property type="nucleotide sequence ID" value="NC_011415.1"/>
</dbReference>
<dbReference type="SMR" id="B6I080"/>
<dbReference type="GeneID" id="75204621"/>
<dbReference type="KEGG" id="ecy:ECSE_0310"/>
<dbReference type="HOGENOM" id="CLU_106652_0_0_6"/>
<dbReference type="Proteomes" id="UP000008199">
    <property type="component" value="Chromosome"/>
</dbReference>
<dbReference type="Gene3D" id="2.60.40.10">
    <property type="entry name" value="Immunoglobulins"/>
    <property type="match status" value="1"/>
</dbReference>
<dbReference type="InterPro" id="IPR040695">
    <property type="entry name" value="EcpB_C"/>
</dbReference>
<dbReference type="InterPro" id="IPR013783">
    <property type="entry name" value="Ig-like_fold"/>
</dbReference>
<dbReference type="InterPro" id="IPR008962">
    <property type="entry name" value="PapD-like_sf"/>
</dbReference>
<dbReference type="Pfam" id="PF18649">
    <property type="entry name" value="EcpB_C"/>
    <property type="match status" value="1"/>
</dbReference>
<dbReference type="SUPFAM" id="SSF49354">
    <property type="entry name" value="PapD-like"/>
    <property type="match status" value="1"/>
</dbReference>